<proteinExistence type="inferred from homology"/>
<sequence>MNQPSKAPRAPRSSAATPKNKKKSRAELDQEAREHKRAKKRRGLASGSRTQVESTNQKNKAAAQAKDPRIGSKVPVALVVEDKPKAKPQPKPKAEAKPKPRLTPEEELAKLENDERLDALLDRIDDGETLSAEDQKYVDQTLDRIDALMEQLGIELGDDDEEEEEKREDILKLLKGGNPKDVI</sequence>
<reference key="1">
    <citation type="submission" date="2007-09" db="EMBL/GenBank/DDBJ databases">
        <title>Complete sequence of chromosome of Serratia proteamaculans 568.</title>
        <authorList>
            <consortium name="US DOE Joint Genome Institute"/>
            <person name="Copeland A."/>
            <person name="Lucas S."/>
            <person name="Lapidus A."/>
            <person name="Barry K."/>
            <person name="Glavina del Rio T."/>
            <person name="Dalin E."/>
            <person name="Tice H."/>
            <person name="Pitluck S."/>
            <person name="Chain P."/>
            <person name="Malfatti S."/>
            <person name="Shin M."/>
            <person name="Vergez L."/>
            <person name="Schmutz J."/>
            <person name="Larimer F."/>
            <person name="Land M."/>
            <person name="Hauser L."/>
            <person name="Kyrpides N."/>
            <person name="Kim E."/>
            <person name="Taghavi S."/>
            <person name="Newman L."/>
            <person name="Vangronsveld J."/>
            <person name="van der Lelie D."/>
            <person name="Richardson P."/>
        </authorList>
    </citation>
    <scope>NUCLEOTIDE SEQUENCE [LARGE SCALE GENOMIC DNA]</scope>
    <source>
        <strain>568</strain>
    </source>
</reference>
<evidence type="ECO:0000255" key="1">
    <source>
        <dbReference type="HAMAP-Rule" id="MF_01058"/>
    </source>
</evidence>
<evidence type="ECO:0000256" key="2">
    <source>
        <dbReference type="SAM" id="MobiDB-lite"/>
    </source>
</evidence>
<accession>A8GLI7</accession>
<keyword id="KW-0343">GTPase activation</keyword>
<keyword id="KW-0690">Ribosome biogenesis</keyword>
<gene>
    <name evidence="1" type="primary">yihI</name>
    <name type="ordered locus">Spro_4885</name>
</gene>
<organism>
    <name type="scientific">Serratia proteamaculans (strain 568)</name>
    <dbReference type="NCBI Taxonomy" id="399741"/>
    <lineage>
        <taxon>Bacteria</taxon>
        <taxon>Pseudomonadati</taxon>
        <taxon>Pseudomonadota</taxon>
        <taxon>Gammaproteobacteria</taxon>
        <taxon>Enterobacterales</taxon>
        <taxon>Yersiniaceae</taxon>
        <taxon>Serratia</taxon>
    </lineage>
</organism>
<dbReference type="EMBL" id="CP000826">
    <property type="protein sequence ID" value="ABV43977.1"/>
    <property type="molecule type" value="Genomic_DNA"/>
</dbReference>
<dbReference type="SMR" id="A8GLI7"/>
<dbReference type="STRING" id="399741.Spro_4885"/>
<dbReference type="KEGG" id="spe:Spro_4885"/>
<dbReference type="eggNOG" id="COG3078">
    <property type="taxonomic scope" value="Bacteria"/>
</dbReference>
<dbReference type="HOGENOM" id="CLU_094104_2_0_6"/>
<dbReference type="OrthoDB" id="5677577at2"/>
<dbReference type="GO" id="GO:0005096">
    <property type="term" value="F:GTPase activator activity"/>
    <property type="evidence" value="ECO:0007669"/>
    <property type="project" value="UniProtKB-KW"/>
</dbReference>
<dbReference type="GO" id="GO:0042254">
    <property type="term" value="P:ribosome biogenesis"/>
    <property type="evidence" value="ECO:0007669"/>
    <property type="project" value="UniProtKB-KW"/>
</dbReference>
<dbReference type="HAMAP" id="MF_01058">
    <property type="entry name" value="GAP_YihI"/>
    <property type="match status" value="1"/>
</dbReference>
<dbReference type="InterPro" id="IPR007336">
    <property type="entry name" value="YihI"/>
</dbReference>
<dbReference type="NCBIfam" id="NF003560">
    <property type="entry name" value="PRK05244.1-1"/>
    <property type="match status" value="1"/>
</dbReference>
<dbReference type="Pfam" id="PF04220">
    <property type="entry name" value="YihI"/>
    <property type="match status" value="1"/>
</dbReference>
<name>YIHI_SERP5</name>
<feature type="chain" id="PRO_1000064430" description="Der GTPase-activating protein YihI">
    <location>
        <begin position="1"/>
        <end position="183"/>
    </location>
</feature>
<feature type="region of interest" description="Disordered" evidence="2">
    <location>
        <begin position="1"/>
        <end position="114"/>
    </location>
</feature>
<feature type="compositionally biased region" description="Low complexity" evidence="2">
    <location>
        <begin position="1"/>
        <end position="18"/>
    </location>
</feature>
<feature type="compositionally biased region" description="Basic and acidic residues" evidence="2">
    <location>
        <begin position="25"/>
        <end position="34"/>
    </location>
</feature>
<feature type="compositionally biased region" description="Low complexity" evidence="2">
    <location>
        <begin position="56"/>
        <end position="65"/>
    </location>
</feature>
<feature type="compositionally biased region" description="Basic and acidic residues" evidence="2">
    <location>
        <begin position="92"/>
        <end position="114"/>
    </location>
</feature>
<comment type="function">
    <text evidence="1">A GTPase-activating protein (GAP) that modifies Der/EngA GTPase function. May play a role in ribosome biogenesis.</text>
</comment>
<comment type="subunit">
    <text evidence="1">Interacts with Der.</text>
</comment>
<comment type="similarity">
    <text evidence="1">Belongs to the YihI family.</text>
</comment>
<protein>
    <recommendedName>
        <fullName evidence="1">Der GTPase-activating protein YihI</fullName>
    </recommendedName>
</protein>